<gene>
    <name evidence="7" type="primary">FADX</name>
    <name evidence="6" type="synonym">FAC</name>
</gene>
<dbReference type="EC" id="1.14.19.-" evidence="7"/>
<dbReference type="EC" id="1.14.19.16" evidence="2"/>
<dbReference type="EMBL" id="AJ437140">
    <property type="protein sequence ID" value="CAD24672.1"/>
    <property type="status" value="ALT_SEQ"/>
    <property type="molecule type" value="mRNA"/>
</dbReference>
<dbReference type="EMBL" id="AY178446">
    <property type="protein sequence ID" value="AAO37753.1"/>
    <property type="molecule type" value="mRNA"/>
</dbReference>
<dbReference type="SMR" id="Q84UB8"/>
<dbReference type="KEGG" id="ag:AAO37753"/>
<dbReference type="KEGG" id="ag:CAD24672"/>
<dbReference type="BioCyc" id="MetaCyc:MONOMER-12610"/>
<dbReference type="BRENDA" id="1.14.19.16">
    <property type="organism ID" value="14164"/>
</dbReference>
<dbReference type="BRENDA" id="1.14.19.33">
    <property type="organism ID" value="14164"/>
</dbReference>
<dbReference type="UniPathway" id="UPA00658"/>
<dbReference type="Proteomes" id="UP000515151">
    <property type="component" value="Unplaced"/>
</dbReference>
<dbReference type="GO" id="GO:0016020">
    <property type="term" value="C:membrane"/>
    <property type="evidence" value="ECO:0007669"/>
    <property type="project" value="UniProtKB-SubCell"/>
</dbReference>
<dbReference type="GO" id="GO:0016717">
    <property type="term" value="F:oxidoreductase activity, acting on paired donors, with oxidation of a pair of donors resulting in the reduction of molecular oxygen to two molecules of water"/>
    <property type="evidence" value="ECO:0007669"/>
    <property type="project" value="InterPro"/>
</dbReference>
<dbReference type="GO" id="GO:0006636">
    <property type="term" value="P:unsaturated fatty acid biosynthetic process"/>
    <property type="evidence" value="ECO:0007669"/>
    <property type="project" value="UniProtKB-UniPathway"/>
</dbReference>
<dbReference type="CDD" id="cd03507">
    <property type="entry name" value="Delta12-FADS-like"/>
    <property type="match status" value="1"/>
</dbReference>
<dbReference type="InterPro" id="IPR005804">
    <property type="entry name" value="FA_desaturase_dom"/>
</dbReference>
<dbReference type="InterPro" id="IPR021863">
    <property type="entry name" value="FAS_N"/>
</dbReference>
<dbReference type="InterPro" id="IPR012171">
    <property type="entry name" value="Fatty_acid_desaturase"/>
</dbReference>
<dbReference type="PANTHER" id="PTHR32100">
    <property type="entry name" value="OMEGA-6 FATTY ACID DESATURASE, CHLOROPLASTIC"/>
    <property type="match status" value="1"/>
</dbReference>
<dbReference type="Pfam" id="PF11960">
    <property type="entry name" value="DUF3474"/>
    <property type="match status" value="1"/>
</dbReference>
<dbReference type="Pfam" id="PF00487">
    <property type="entry name" value="FA_desaturase"/>
    <property type="match status" value="1"/>
</dbReference>
<proteinExistence type="evidence at protein level"/>
<name>FADX_PUNGR</name>
<feature type="chain" id="PRO_0000434635" description="Bifunctional fatty acid conjugase/Delta(12)-oleate desaturase">
    <location>
        <begin position="1"/>
        <end position="395"/>
    </location>
</feature>
<feature type="transmembrane region" description="Helical" evidence="1">
    <location>
        <begin position="73"/>
        <end position="93"/>
    </location>
</feature>
<feature type="transmembrane region" description="Helical" evidence="1">
    <location>
        <begin position="97"/>
        <end position="117"/>
    </location>
</feature>
<feature type="transmembrane region" description="Helical" evidence="1">
    <location>
        <begin position="130"/>
        <end position="150"/>
    </location>
</feature>
<feature type="transmembrane region" description="Helical" evidence="1">
    <location>
        <begin position="192"/>
        <end position="212"/>
    </location>
</feature>
<feature type="transmembrane region" description="Helical" evidence="1">
    <location>
        <begin position="236"/>
        <end position="256"/>
    </location>
</feature>
<feature type="transmembrane region" description="Helical" evidence="1">
    <location>
        <begin position="264"/>
        <end position="284"/>
    </location>
</feature>
<feature type="short sequence motif" description="Histidine box-1" evidence="7">
    <location>
        <begin position="118"/>
        <end position="122"/>
    </location>
</feature>
<feature type="short sequence motif" description="Histidine box-2" evidence="7">
    <location>
        <begin position="154"/>
        <end position="158"/>
    </location>
</feature>
<feature type="short sequence motif" description="Histidine box-3" evidence="7">
    <location>
        <begin position="328"/>
        <end position="332"/>
    </location>
</feature>
<feature type="sequence conflict" description="In Ref. 1; CAD24672." evidence="7" ref="1">
    <original>P</original>
    <variation>S</variation>
    <location>
        <position position="351"/>
    </location>
</feature>
<organism evidence="9">
    <name type="scientific">Punica granatum</name>
    <name type="common">Pomegranate</name>
    <dbReference type="NCBI Taxonomy" id="22663"/>
    <lineage>
        <taxon>Eukaryota</taxon>
        <taxon>Viridiplantae</taxon>
        <taxon>Streptophyta</taxon>
        <taxon>Embryophyta</taxon>
        <taxon>Tracheophyta</taxon>
        <taxon>Spermatophyta</taxon>
        <taxon>Magnoliopsida</taxon>
        <taxon>eudicotyledons</taxon>
        <taxon>Gunneridae</taxon>
        <taxon>Pentapetalae</taxon>
        <taxon>rosids</taxon>
        <taxon>malvids</taxon>
        <taxon>Myrtales</taxon>
        <taxon>Lythraceae</taxon>
        <taxon>Punica</taxon>
    </lineage>
</organism>
<protein>
    <recommendedName>
        <fullName evidence="6">Bifunctional fatty acid conjugase/Delta(12)-oleate desaturase</fullName>
        <shortName evidence="6">PgFAC</shortName>
    </recommendedName>
    <alternativeName>
        <fullName evidence="8">Delta(12)-acyl-lipid-conjugase FADX</fullName>
    </alternativeName>
    <alternativeName>
        <fullName evidence="5">Delta(12)-linoleic acid (1,4)-acyl-lipid-desaturase</fullName>
    </alternativeName>
    <alternativeName>
        <fullName evidence="6">Delta(12)-oleate desaturase</fullName>
        <ecNumber evidence="7">1.14.19.-</ecNumber>
    </alternativeName>
    <alternativeName>
        <fullName evidence="6">Fatty acid conjugase</fullName>
    </alternativeName>
    <alternativeName>
        <fullName evidence="5">Linoleoyl-lipid Delta(12) conjugase (11E,13Z-forming)</fullName>
        <ecNumber evidence="2">1.14.19.16</ecNumber>
    </alternativeName>
</protein>
<evidence type="ECO:0000255" key="1"/>
<evidence type="ECO:0000269" key="2">
    <source>
    </source>
</evidence>
<evidence type="ECO:0000269" key="3">
    <source>
    </source>
</evidence>
<evidence type="ECO:0000269" key="4">
    <source>
    </source>
</evidence>
<evidence type="ECO:0000303" key="5">
    <source>
    </source>
</evidence>
<evidence type="ECO:0000303" key="6">
    <source>
    </source>
</evidence>
<evidence type="ECO:0000305" key="7"/>
<evidence type="ECO:0000305" key="8">
    <source>
    </source>
</evidence>
<evidence type="ECO:0000312" key="9">
    <source>
        <dbReference type="EMBL" id="AAO37753.1"/>
    </source>
</evidence>
<comment type="function">
    <text evidence="2 3 4">Converts a single cis double bond at position 12 of linoleate incorporated into phosphatidylcholine into conjugated 11-trans and 13-cis double bonds (PubMed:12354116, PubMed:12464604, PubMed:25000918). Produces punicic acid (18:3(9Z,11E,13Z)) from linoleic acid and conjugated octadecatetraenoic fatty acid from gamma-linolenic acid (PubMed:12354116, PubMed:25000918). No activity with cis- and trans-vaccenic acid, alpha-linolenic acid or homo-gamma-linolenic acid (PubMed:12354116). 16:2(9Z,12Z), 18:3(9Z,12Z,15Z) and 18:2(9Z,12Z) are substrates for the conjugase to form trans-Delta(11) and cis-Delta(13) double bonds (PubMed:12464604). No activity on the cis-Delta(9) double bonds of oleic and palmitoleic acids (PubMed:12464604).</text>
</comment>
<comment type="catalytic activity">
    <reaction evidence="2">
        <text>a (9Z,12Z)-octadecadienoyl-containing glycerolipid + 2 Fe(II)-[cytochrome b5] + O2 + 2 H(+) = a (9Z,11E,13Z)-octadeca-9,11,13-trienoyl-containing glycerolipid + 2 Fe(III)-[cytochrome b5] + 2 H2O</text>
        <dbReference type="Rhea" id="RHEA:46532"/>
        <dbReference type="Rhea" id="RHEA-COMP:10438"/>
        <dbReference type="Rhea" id="RHEA-COMP:10439"/>
        <dbReference type="ChEBI" id="CHEBI:15377"/>
        <dbReference type="ChEBI" id="CHEBI:15378"/>
        <dbReference type="ChEBI" id="CHEBI:15379"/>
        <dbReference type="ChEBI" id="CHEBI:29033"/>
        <dbReference type="ChEBI" id="CHEBI:29034"/>
        <dbReference type="ChEBI" id="CHEBI:88259"/>
        <dbReference type="ChEBI" id="CHEBI:88351"/>
        <dbReference type="EC" id="1.14.19.16"/>
    </reaction>
</comment>
<comment type="pathway">
    <text>Lipid metabolism; polyunsaturated fatty acid biosynthesis.</text>
</comment>
<comment type="subcellular location">
    <subcellularLocation>
        <location evidence="1">Membrane</location>
        <topology evidence="1">Multi-pass membrane protein</topology>
    </subcellularLocation>
</comment>
<comment type="domain">
    <text evidence="7">The histidine box domains may contain the active site and/or be involved in metal ion binding.</text>
</comment>
<comment type="similarity">
    <text evidence="7">Belongs to the fatty acid desaturase type 1 family.</text>
</comment>
<comment type="sequence caution" evidence="7">
    <conflict type="erroneous termination">
        <sequence resource="EMBL-CDS" id="CAD24672"/>
    </conflict>
    <text>Truncated C-terminus.</text>
</comment>
<reference key="1">
    <citation type="journal article" date="2002" name="Eur. J. Biochem.">
        <title>Formation of conjugated Delta11Delta13-double bonds by Delta12-linoleic acid (1,4)-acyl-lipid-desaturase in pomegranate seeds.</title>
        <authorList>
            <person name="Hornung E."/>
            <person name="Pernstich C."/>
            <person name="Feussner I."/>
        </authorList>
    </citation>
    <scope>NUCLEOTIDE SEQUENCE [MRNA]</scope>
    <scope>FUNCTION</scope>
    <scope>CATALYTIC ACTIVITY</scope>
    <scope>SUBSTRATE SPECIFICITY</scope>
</reference>
<reference key="2">
    <citation type="journal article" date="2003" name="J. Biol. Chem.">
        <title>Delta 12-oleate desaturase-related enzymes associated with formation of conjugated trans-delta 11, cis-delta 13 double bonds.</title>
        <authorList>
            <person name="Iwabuchi M."/>
            <person name="Kohno-Murase J."/>
            <person name="Imamura J."/>
        </authorList>
    </citation>
    <scope>NUCLEOTIDE SEQUENCE [MRNA]</scope>
    <scope>FUNCTION</scope>
    <scope>SUBSTRATE SPECIFICITY</scope>
</reference>
<reference key="3">
    <citation type="journal article" date="2014" name="Planta">
        <title>Combined transgenic expression of Punica granatum conjugase (FADX) and FAD2 desaturase in high linoleic acid Arabidopsis thaliana mutant leads to increased accumulation of punicic acid.</title>
        <authorList>
            <person name="Mietkiewska E."/>
            <person name="Miles R."/>
            <person name="Wickramarathna A."/>
            <person name="Sahibollah A.F."/>
            <person name="Greer M.S."/>
            <person name="Chen G."/>
            <person name="Weselake R.J."/>
        </authorList>
    </citation>
    <scope>FUNCTION</scope>
</reference>
<keyword id="KW-0275">Fatty acid biosynthesis</keyword>
<keyword id="KW-0276">Fatty acid metabolism</keyword>
<keyword id="KW-0444">Lipid biosynthesis</keyword>
<keyword id="KW-0443">Lipid metabolism</keyword>
<keyword id="KW-0472">Membrane</keyword>
<keyword id="KW-0560">Oxidoreductase</keyword>
<keyword id="KW-0812">Transmembrane</keyword>
<keyword id="KW-1133">Transmembrane helix</keyword>
<accession>Q84UB8</accession>
<accession>Q84VT1</accession>
<sequence>MGADGTMSPVLTKRRPDQEINKLDIKPNHEVDIARRAPHSKPPFTLSDLRSAIPPHCFHRSLLMSSSYLIRDFALAFLFYHSAVTYIPLLPKPLACMAWPVYWFLQGSNMLGIWVIAHECGHQAFSNYGWVNDAVGFFLHTSLLVPYFPFKYSHRRHHSNTNSVEHDEVFVPRHKDGVQWYYRFFNNTPGRVLTLTLTLLVGWPSYLAFNASGRPYDGFASHYNPNAQIFNLRERFWVHVSNIGILAIYYILYRLATTKGLPWLLSIYGVPVLILNAFVVLITFLQHSHPALPHYNSDEWDWLRGALATVDRDYGFLNEVFHDITDTHVIHHLFPTMPHYNAKEATVSIRPILKDYYKFDRTPIWRALWREAKECLYVEADGTGSKGVLWFKSKF</sequence>